<reference key="1">
    <citation type="journal article" date="2000" name="Dev. Genes Evol.">
        <title>An in situ hybridization screen for the rapid isolation of differentially expressed genes.</title>
        <authorList>
            <person name="Henrich T."/>
            <person name="Wittbrodt J."/>
        </authorList>
    </citation>
    <scope>NUCLEOTIDE SEQUENCE [MRNA]</scope>
</reference>
<gene>
    <name type="primary">hspe1</name>
    <name type="synonym">hsp10</name>
</gene>
<feature type="chain" id="PRO_0000174920" description="10 kDa heat shock protein, mitochondrial">
    <location>
        <begin position="1"/>
        <end position="99"/>
    </location>
</feature>
<organism>
    <name type="scientific">Oryzias latipes</name>
    <name type="common">Japanese rice fish</name>
    <name type="synonym">Japanese killifish</name>
    <dbReference type="NCBI Taxonomy" id="8090"/>
    <lineage>
        <taxon>Eukaryota</taxon>
        <taxon>Metazoa</taxon>
        <taxon>Chordata</taxon>
        <taxon>Craniata</taxon>
        <taxon>Vertebrata</taxon>
        <taxon>Euteleostomi</taxon>
        <taxon>Actinopterygii</taxon>
        <taxon>Neopterygii</taxon>
        <taxon>Teleostei</taxon>
        <taxon>Neoteleostei</taxon>
        <taxon>Acanthomorphata</taxon>
        <taxon>Ovalentaria</taxon>
        <taxon>Atherinomorphae</taxon>
        <taxon>Beloniformes</taxon>
        <taxon>Adrianichthyidae</taxon>
        <taxon>Oryziinae</taxon>
        <taxon>Oryzias</taxon>
    </lineage>
</organism>
<evidence type="ECO:0000250" key="1">
    <source>
        <dbReference type="UniProtKB" id="P61604"/>
    </source>
</evidence>
<evidence type="ECO:0000305" key="2"/>
<protein>
    <recommendedName>
        <fullName>10 kDa heat shock protein, mitochondrial</fullName>
        <shortName>Hsp10</shortName>
    </recommendedName>
    <alternativeName>
        <fullName>10 kDa chaperonin</fullName>
    </alternativeName>
    <alternativeName>
        <fullName>Chaperonin 10</fullName>
        <shortName>CPN10</shortName>
    </alternativeName>
</protein>
<comment type="function">
    <text evidence="1">Co-chaperonin implicated in mitochondrial protein import and macromolecular assembly. Together with Hsp60, facilitates the correct folding of imported proteins. May also prevent misfolding and promote the refolding and proper assembly of unfolded polypeptides generated under stress conditions in the mitochondrial matrix. The functional units of these chaperonins consist of heptameric rings of the large subunit Hsp60, which function as a back-to-back double ring. In a cyclic reaction, Hsp60 ring complexes bind one unfolded substrate protein per ring, followed by the binding of ATP and association with 2 heptameric rings of the co-chaperonin Hsp10. This leads to sequestration of the substrate protein in the inner cavity of Hsp60 where, for a certain period of time, it can fold undisturbed by other cell components. Synchronous hydrolysis of ATP in all Hsp60 subunits results in the dissociation of the chaperonin rings and the release of ADP and the folded substrate protein.</text>
</comment>
<comment type="subunit">
    <text evidence="1">Homoheptamer arranged in a ring structure. 2 heptameric Hsp10 rings interact with a Hsp60 tetradecamer in the structure of a back-to-back double heptameric ring to form the symmetrical football complex.</text>
</comment>
<comment type="subcellular location">
    <subcellularLocation>
        <location evidence="1">Mitochondrion matrix</location>
    </subcellularLocation>
</comment>
<comment type="similarity">
    <text evidence="2">Belongs to the GroES chaperonin family.</text>
</comment>
<dbReference type="EMBL" id="AJ238010">
    <property type="protein sequence ID" value="CAB40895.1"/>
    <property type="molecule type" value="mRNA"/>
</dbReference>
<dbReference type="RefSeq" id="NP_001098232.1">
    <property type="nucleotide sequence ID" value="NM_001104762.1"/>
</dbReference>
<dbReference type="SMR" id="Q9W6X3"/>
<dbReference type="FunCoup" id="Q9W6X3">
    <property type="interactions" value="1420"/>
</dbReference>
<dbReference type="STRING" id="8090.ENSORLP00000025855"/>
<dbReference type="GeneID" id="100049361"/>
<dbReference type="KEGG" id="ola:100049361"/>
<dbReference type="CTD" id="3336"/>
<dbReference type="eggNOG" id="KOG1641">
    <property type="taxonomic scope" value="Eukaryota"/>
</dbReference>
<dbReference type="InParanoid" id="Q9W6X3"/>
<dbReference type="OrthoDB" id="184876at2759"/>
<dbReference type="Proteomes" id="UP000001038">
    <property type="component" value="Unplaced"/>
</dbReference>
<dbReference type="Proteomes" id="UP000265180">
    <property type="component" value="Chromosome 9"/>
</dbReference>
<dbReference type="Proteomes" id="UP000265200">
    <property type="component" value="Chromosome 9"/>
</dbReference>
<dbReference type="GO" id="GO:0005759">
    <property type="term" value="C:mitochondrial matrix"/>
    <property type="evidence" value="ECO:0000318"/>
    <property type="project" value="GO_Central"/>
</dbReference>
<dbReference type="GO" id="GO:0005739">
    <property type="term" value="C:mitochondrion"/>
    <property type="evidence" value="ECO:0000318"/>
    <property type="project" value="GO_Central"/>
</dbReference>
<dbReference type="GO" id="GO:0005524">
    <property type="term" value="F:ATP binding"/>
    <property type="evidence" value="ECO:0007669"/>
    <property type="project" value="InterPro"/>
</dbReference>
<dbReference type="GO" id="GO:0046872">
    <property type="term" value="F:metal ion binding"/>
    <property type="evidence" value="ECO:0000318"/>
    <property type="project" value="GO_Central"/>
</dbReference>
<dbReference type="GO" id="GO:0044183">
    <property type="term" value="F:protein folding chaperone"/>
    <property type="evidence" value="ECO:0007669"/>
    <property type="project" value="InterPro"/>
</dbReference>
<dbReference type="GO" id="GO:0051087">
    <property type="term" value="F:protein-folding chaperone binding"/>
    <property type="evidence" value="ECO:0000318"/>
    <property type="project" value="GO_Central"/>
</dbReference>
<dbReference type="GO" id="GO:0051082">
    <property type="term" value="F:unfolded protein binding"/>
    <property type="evidence" value="ECO:0000318"/>
    <property type="project" value="GO_Central"/>
</dbReference>
<dbReference type="GO" id="GO:0051085">
    <property type="term" value="P:chaperone cofactor-dependent protein refolding"/>
    <property type="evidence" value="ECO:0000318"/>
    <property type="project" value="GO_Central"/>
</dbReference>
<dbReference type="CDD" id="cd00320">
    <property type="entry name" value="cpn10"/>
    <property type="match status" value="1"/>
</dbReference>
<dbReference type="FunFam" id="2.30.33.40:FF:000002">
    <property type="entry name" value="10 kDa chaperonin, mitochondrial"/>
    <property type="match status" value="1"/>
</dbReference>
<dbReference type="Gene3D" id="2.30.33.40">
    <property type="entry name" value="GroES chaperonin"/>
    <property type="match status" value="1"/>
</dbReference>
<dbReference type="HAMAP" id="MF_00580">
    <property type="entry name" value="CH10"/>
    <property type="match status" value="1"/>
</dbReference>
<dbReference type="InterPro" id="IPR020818">
    <property type="entry name" value="Chaperonin_GroES"/>
</dbReference>
<dbReference type="InterPro" id="IPR037124">
    <property type="entry name" value="Chaperonin_GroES_sf"/>
</dbReference>
<dbReference type="InterPro" id="IPR018369">
    <property type="entry name" value="Chaprnonin_Cpn10_CS"/>
</dbReference>
<dbReference type="InterPro" id="IPR011032">
    <property type="entry name" value="GroES-like_sf"/>
</dbReference>
<dbReference type="PANTHER" id="PTHR10772">
    <property type="entry name" value="10 KDA HEAT SHOCK PROTEIN"/>
    <property type="match status" value="1"/>
</dbReference>
<dbReference type="PANTHER" id="PTHR10772:SF0">
    <property type="entry name" value="10 KDA HEAT SHOCK PROTEIN, MITOCHONDRIAL"/>
    <property type="match status" value="1"/>
</dbReference>
<dbReference type="Pfam" id="PF00166">
    <property type="entry name" value="Cpn10"/>
    <property type="match status" value="1"/>
</dbReference>
<dbReference type="PRINTS" id="PR00297">
    <property type="entry name" value="CHAPERONIN10"/>
</dbReference>
<dbReference type="SMART" id="SM00883">
    <property type="entry name" value="Cpn10"/>
    <property type="match status" value="1"/>
</dbReference>
<dbReference type="SUPFAM" id="SSF50129">
    <property type="entry name" value="GroES-like"/>
    <property type="match status" value="1"/>
</dbReference>
<dbReference type="PROSITE" id="PS00681">
    <property type="entry name" value="CHAPERONINS_CPN10"/>
    <property type="match status" value="1"/>
</dbReference>
<accession>Q9W6X3</accession>
<name>CH10_ORYLA</name>
<keyword id="KW-0143">Chaperone</keyword>
<keyword id="KW-0496">Mitochondrion</keyword>
<keyword id="KW-1185">Reference proteome</keyword>
<sequence length="99" mass="10962">MAFRKFLPLFDRVLVERLMAETVTKGGIMLPEKSQGKVLQATVVAVGPGSMNQKGEVQPMSVKVGEKVLLPQYGGTKVVLEDKDYFLFRDADILGKYVD</sequence>
<proteinExistence type="inferred from homology"/>